<gene>
    <name evidence="1" type="primary">prfA</name>
    <name type="ordered locus">YE2431</name>
</gene>
<keyword id="KW-0963">Cytoplasm</keyword>
<keyword id="KW-0488">Methylation</keyword>
<keyword id="KW-0648">Protein biosynthesis</keyword>
<sequence length="360" mass="40539">MKSSIVAKLEALQERHEEVLAHLGDANVIADQDRFRALSREYAQLTDVTRCFKEWRSVQDDIEAAEMMLDDPEMREMAQDELKEAKARSEELEQQLQVLLLPKDPDDERDCFLEIRAGTGGDEAAIFAGDMFRMYSRYAEARRWKVEIMSASEGEHGGYKEVIAKVSGDGVFGQLKFESGGHRVQRVPETESQGRIHTSACTVAVMPAIPEAEMPEINAGDLRIDTFRSSGAGGQHVNTTDSAIRITHIPTGIVVECQDERSQHKNKAKAMSVLGARIRAAEMQKRQQAEASERRNLLGSGDRSDRNRTYNFPQGRVTDHRINLTLYRLDEVMEGKLDMLIQPIVQEYQADQLSALSEQD</sequence>
<protein>
    <recommendedName>
        <fullName evidence="1">Peptide chain release factor 1</fullName>
        <shortName evidence="1">RF-1</shortName>
    </recommendedName>
</protein>
<organism>
    <name type="scientific">Yersinia enterocolitica serotype O:8 / biotype 1B (strain NCTC 13174 / 8081)</name>
    <dbReference type="NCBI Taxonomy" id="393305"/>
    <lineage>
        <taxon>Bacteria</taxon>
        <taxon>Pseudomonadati</taxon>
        <taxon>Pseudomonadota</taxon>
        <taxon>Gammaproteobacteria</taxon>
        <taxon>Enterobacterales</taxon>
        <taxon>Yersiniaceae</taxon>
        <taxon>Yersinia</taxon>
    </lineage>
</organism>
<dbReference type="EMBL" id="AM286415">
    <property type="protein sequence ID" value="CAL12478.1"/>
    <property type="molecule type" value="Genomic_DNA"/>
</dbReference>
<dbReference type="RefSeq" id="WP_005161322.1">
    <property type="nucleotide sequence ID" value="NC_008800.1"/>
</dbReference>
<dbReference type="RefSeq" id="YP_001006644.1">
    <property type="nucleotide sequence ID" value="NC_008800.1"/>
</dbReference>
<dbReference type="SMR" id="A1JRU0"/>
<dbReference type="GeneID" id="31409326"/>
<dbReference type="KEGG" id="yen:YE2431"/>
<dbReference type="PATRIC" id="fig|393305.7.peg.2582"/>
<dbReference type="eggNOG" id="COG0216">
    <property type="taxonomic scope" value="Bacteria"/>
</dbReference>
<dbReference type="HOGENOM" id="CLU_036856_0_1_6"/>
<dbReference type="OrthoDB" id="9806673at2"/>
<dbReference type="Proteomes" id="UP000000642">
    <property type="component" value="Chromosome"/>
</dbReference>
<dbReference type="GO" id="GO:0005737">
    <property type="term" value="C:cytoplasm"/>
    <property type="evidence" value="ECO:0007669"/>
    <property type="project" value="UniProtKB-SubCell"/>
</dbReference>
<dbReference type="GO" id="GO:0016149">
    <property type="term" value="F:translation release factor activity, codon specific"/>
    <property type="evidence" value="ECO:0007669"/>
    <property type="project" value="UniProtKB-UniRule"/>
</dbReference>
<dbReference type="FunFam" id="3.30.160.20:FF:000004">
    <property type="entry name" value="Peptide chain release factor 1"/>
    <property type="match status" value="1"/>
</dbReference>
<dbReference type="FunFam" id="3.30.70.1660:FF:000002">
    <property type="entry name" value="Peptide chain release factor 1"/>
    <property type="match status" value="1"/>
</dbReference>
<dbReference type="FunFam" id="3.30.70.1660:FF:000004">
    <property type="entry name" value="Peptide chain release factor 1"/>
    <property type="match status" value="1"/>
</dbReference>
<dbReference type="Gene3D" id="3.30.160.20">
    <property type="match status" value="1"/>
</dbReference>
<dbReference type="Gene3D" id="3.30.70.1660">
    <property type="match status" value="1"/>
</dbReference>
<dbReference type="Gene3D" id="6.10.140.1950">
    <property type="match status" value="1"/>
</dbReference>
<dbReference type="HAMAP" id="MF_00093">
    <property type="entry name" value="Rel_fac_1"/>
    <property type="match status" value="1"/>
</dbReference>
<dbReference type="InterPro" id="IPR005139">
    <property type="entry name" value="PCRF"/>
</dbReference>
<dbReference type="InterPro" id="IPR000352">
    <property type="entry name" value="Pep_chain_release_fac_I"/>
</dbReference>
<dbReference type="InterPro" id="IPR045853">
    <property type="entry name" value="Pep_chain_release_fac_I_sf"/>
</dbReference>
<dbReference type="InterPro" id="IPR050057">
    <property type="entry name" value="Prokaryotic/Mito_RF"/>
</dbReference>
<dbReference type="InterPro" id="IPR004373">
    <property type="entry name" value="RF-1"/>
</dbReference>
<dbReference type="NCBIfam" id="TIGR00019">
    <property type="entry name" value="prfA"/>
    <property type="match status" value="1"/>
</dbReference>
<dbReference type="NCBIfam" id="NF001859">
    <property type="entry name" value="PRK00591.1"/>
    <property type="match status" value="1"/>
</dbReference>
<dbReference type="PANTHER" id="PTHR43804">
    <property type="entry name" value="LD18447P"/>
    <property type="match status" value="1"/>
</dbReference>
<dbReference type="PANTHER" id="PTHR43804:SF7">
    <property type="entry name" value="LD18447P"/>
    <property type="match status" value="1"/>
</dbReference>
<dbReference type="Pfam" id="PF03462">
    <property type="entry name" value="PCRF"/>
    <property type="match status" value="1"/>
</dbReference>
<dbReference type="Pfam" id="PF00472">
    <property type="entry name" value="RF-1"/>
    <property type="match status" value="1"/>
</dbReference>
<dbReference type="SMART" id="SM00937">
    <property type="entry name" value="PCRF"/>
    <property type="match status" value="1"/>
</dbReference>
<dbReference type="SUPFAM" id="SSF75620">
    <property type="entry name" value="Release factor"/>
    <property type="match status" value="1"/>
</dbReference>
<dbReference type="PROSITE" id="PS00745">
    <property type="entry name" value="RF_PROK_I"/>
    <property type="match status" value="1"/>
</dbReference>
<reference key="1">
    <citation type="journal article" date="2006" name="PLoS Genet.">
        <title>The complete genome sequence and comparative genome analysis of the high pathogenicity Yersinia enterocolitica strain 8081.</title>
        <authorList>
            <person name="Thomson N.R."/>
            <person name="Howard S."/>
            <person name="Wren B.W."/>
            <person name="Holden M.T.G."/>
            <person name="Crossman L."/>
            <person name="Challis G.L."/>
            <person name="Churcher C."/>
            <person name="Mungall K."/>
            <person name="Brooks K."/>
            <person name="Chillingworth T."/>
            <person name="Feltwell T."/>
            <person name="Abdellah Z."/>
            <person name="Hauser H."/>
            <person name="Jagels K."/>
            <person name="Maddison M."/>
            <person name="Moule S."/>
            <person name="Sanders M."/>
            <person name="Whitehead S."/>
            <person name="Quail M.A."/>
            <person name="Dougan G."/>
            <person name="Parkhill J."/>
            <person name="Prentice M.B."/>
        </authorList>
    </citation>
    <scope>NUCLEOTIDE SEQUENCE [LARGE SCALE GENOMIC DNA]</scope>
    <source>
        <strain>NCTC 13174 / 8081</strain>
    </source>
</reference>
<feature type="chain" id="PRO_1000004967" description="Peptide chain release factor 1">
    <location>
        <begin position="1"/>
        <end position="360"/>
    </location>
</feature>
<feature type="region of interest" description="Disordered" evidence="2">
    <location>
        <begin position="283"/>
        <end position="313"/>
    </location>
</feature>
<feature type="compositionally biased region" description="Basic and acidic residues" evidence="2">
    <location>
        <begin position="283"/>
        <end position="308"/>
    </location>
</feature>
<feature type="modified residue" description="N5-methylglutamine" evidence="1">
    <location>
        <position position="235"/>
    </location>
</feature>
<comment type="function">
    <text evidence="1">Peptide chain release factor 1 directs the termination of translation in response to the peptide chain termination codons UAG and UAA.</text>
</comment>
<comment type="subcellular location">
    <subcellularLocation>
        <location evidence="1">Cytoplasm</location>
    </subcellularLocation>
</comment>
<comment type="PTM">
    <text evidence="1">Methylated by PrmC. Methylation increases the termination efficiency of RF1.</text>
</comment>
<comment type="similarity">
    <text evidence="1">Belongs to the prokaryotic/mitochondrial release factor family.</text>
</comment>
<proteinExistence type="inferred from homology"/>
<evidence type="ECO:0000255" key="1">
    <source>
        <dbReference type="HAMAP-Rule" id="MF_00093"/>
    </source>
</evidence>
<evidence type="ECO:0000256" key="2">
    <source>
        <dbReference type="SAM" id="MobiDB-lite"/>
    </source>
</evidence>
<name>RF1_YERE8</name>
<accession>A1JRU0</accession>